<proteinExistence type="evidence at protein level"/>
<organism>
    <name type="scientific">Thermotoga maritima (strain ATCC 43589 / DSM 3109 / JCM 10099 / NBRC 100826 / MSB8)</name>
    <dbReference type="NCBI Taxonomy" id="243274"/>
    <lineage>
        <taxon>Bacteria</taxon>
        <taxon>Thermotogati</taxon>
        <taxon>Thermotogota</taxon>
        <taxon>Thermotogae</taxon>
        <taxon>Thermotogales</taxon>
        <taxon>Thermotogaceae</taxon>
        <taxon>Thermotoga</taxon>
    </lineage>
</organism>
<name>COMB_THEMA</name>
<sequence>MVDVVMAPCSPVECRTAVVIDVLRATSTIVTALSNGASGVIPVKTIEEALEKKKEGVLICGERNAQKPKGFNLGNSPLEYRKEKISGKTIVLTTTNGTQVIEKIRSEEIIAASFLNLSAVVEYLKSKEDILLVCAGTNGRFSLEDFLLAGAIVKRLKRNDLGDGAHAAERYFESVENTREEIKKHSSHAKRLISLGFENDIEFCTTEDLFKTVPALVNGVFILKEFP</sequence>
<protein>
    <recommendedName>
        <fullName>Probable 2-phosphosulfolactate phosphatase</fullName>
        <ecNumber>3.1.3.71</ecNumber>
    </recommendedName>
</protein>
<evidence type="ECO:0000250" key="1"/>
<evidence type="ECO:0000305" key="2"/>
<evidence type="ECO:0007829" key="3">
    <source>
        <dbReference type="PDB" id="2YYV"/>
    </source>
</evidence>
<accession>Q9WZQ4</accession>
<dbReference type="EC" id="3.1.3.71"/>
<dbReference type="EMBL" id="AE000512">
    <property type="protein sequence ID" value="AAD35879.1"/>
    <property type="molecule type" value="Genomic_DNA"/>
</dbReference>
<dbReference type="PIR" id="F72334">
    <property type="entry name" value="F72334"/>
</dbReference>
<dbReference type="RefSeq" id="NP_228606.1">
    <property type="nucleotide sequence ID" value="NC_000853.1"/>
</dbReference>
<dbReference type="RefSeq" id="WP_004080870.1">
    <property type="nucleotide sequence ID" value="NC_000853.1"/>
</dbReference>
<dbReference type="PDB" id="2YYV">
    <property type="method" value="X-ray"/>
    <property type="resolution" value="1.65 A"/>
    <property type="chains" value="A/B=1-227"/>
</dbReference>
<dbReference type="PDB" id="2YZO">
    <property type="method" value="X-ray"/>
    <property type="resolution" value="1.85 A"/>
    <property type="chains" value="A/B=1-227"/>
</dbReference>
<dbReference type="PDBsum" id="2YYV"/>
<dbReference type="PDBsum" id="2YZO"/>
<dbReference type="SMR" id="Q9WZQ4"/>
<dbReference type="FunCoup" id="Q9WZQ4">
    <property type="interactions" value="67"/>
</dbReference>
<dbReference type="STRING" id="243274.TM_0797"/>
<dbReference type="PaxDb" id="243274-THEMA_00665"/>
<dbReference type="EnsemblBacteria" id="AAD35879">
    <property type="protein sequence ID" value="AAD35879"/>
    <property type="gene ID" value="TM_0797"/>
</dbReference>
<dbReference type="KEGG" id="tma:TM0797"/>
<dbReference type="KEGG" id="tmi:THEMA_00665"/>
<dbReference type="KEGG" id="tmm:Tmari_0798"/>
<dbReference type="KEGG" id="tmw:THMA_0816"/>
<dbReference type="eggNOG" id="COG2045">
    <property type="taxonomic scope" value="Bacteria"/>
</dbReference>
<dbReference type="InParanoid" id="Q9WZQ4"/>
<dbReference type="OrthoDB" id="4913at2"/>
<dbReference type="EvolutionaryTrace" id="Q9WZQ4"/>
<dbReference type="Proteomes" id="UP000008183">
    <property type="component" value="Chromosome"/>
</dbReference>
<dbReference type="GO" id="GO:0050532">
    <property type="term" value="F:2-phosphosulfolactate phosphatase activity"/>
    <property type="evidence" value="ECO:0007669"/>
    <property type="project" value="UniProtKB-UniRule"/>
</dbReference>
<dbReference type="GO" id="GO:0000287">
    <property type="term" value="F:magnesium ion binding"/>
    <property type="evidence" value="ECO:0007669"/>
    <property type="project" value="UniProtKB-UniRule"/>
</dbReference>
<dbReference type="GO" id="GO:0050545">
    <property type="term" value="F:sulfopyruvate decarboxylase activity"/>
    <property type="evidence" value="ECO:0000318"/>
    <property type="project" value="GO_Central"/>
</dbReference>
<dbReference type="FunFam" id="3.90.1560.10:FF:000001">
    <property type="entry name" value="Probable 2-phosphosulfolactate phosphatase"/>
    <property type="match status" value="1"/>
</dbReference>
<dbReference type="Gene3D" id="3.90.1560.10">
    <property type="entry name" value="ComB-like"/>
    <property type="match status" value="1"/>
</dbReference>
<dbReference type="HAMAP" id="MF_00490">
    <property type="entry name" value="ComB"/>
    <property type="match status" value="1"/>
</dbReference>
<dbReference type="InterPro" id="IPR005238">
    <property type="entry name" value="ComB-like"/>
</dbReference>
<dbReference type="InterPro" id="IPR036702">
    <property type="entry name" value="ComB-like_sf"/>
</dbReference>
<dbReference type="NCBIfam" id="NF002057">
    <property type="entry name" value="PRK00886.1-6"/>
    <property type="match status" value="1"/>
</dbReference>
<dbReference type="PANTHER" id="PTHR37311">
    <property type="entry name" value="2-PHOSPHOSULFOLACTATE PHOSPHATASE-RELATED"/>
    <property type="match status" value="1"/>
</dbReference>
<dbReference type="PANTHER" id="PTHR37311:SF1">
    <property type="entry name" value="2-PHOSPHOSULFOLACTATE PHOSPHATASE-RELATED"/>
    <property type="match status" value="1"/>
</dbReference>
<dbReference type="Pfam" id="PF04029">
    <property type="entry name" value="2-ph_phosp"/>
    <property type="match status" value="1"/>
</dbReference>
<dbReference type="SUPFAM" id="SSF142823">
    <property type="entry name" value="ComB-like"/>
    <property type="match status" value="1"/>
</dbReference>
<comment type="catalytic activity">
    <reaction>
        <text>(2R)-O-phospho-3-sulfolactate + H2O = (2R)-3-sulfolactate + phosphate</text>
        <dbReference type="Rhea" id="RHEA:23416"/>
        <dbReference type="ChEBI" id="CHEBI:15377"/>
        <dbReference type="ChEBI" id="CHEBI:15597"/>
        <dbReference type="ChEBI" id="CHEBI:43474"/>
        <dbReference type="ChEBI" id="CHEBI:58738"/>
        <dbReference type="EC" id="3.1.3.71"/>
    </reaction>
</comment>
<comment type="cofactor">
    <cofactor evidence="1">
        <name>Mg(2+)</name>
        <dbReference type="ChEBI" id="CHEBI:18420"/>
    </cofactor>
</comment>
<comment type="similarity">
    <text evidence="2">Belongs to the ComB family.</text>
</comment>
<feature type="chain" id="PRO_0000081477" description="Probable 2-phosphosulfolactate phosphatase">
    <location>
        <begin position="1"/>
        <end position="227"/>
    </location>
</feature>
<feature type="strand" evidence="3">
    <location>
        <begin position="3"/>
        <end position="7"/>
    </location>
</feature>
<feature type="strand" evidence="3">
    <location>
        <begin position="15"/>
        <end position="20"/>
    </location>
</feature>
<feature type="turn" evidence="3">
    <location>
        <begin position="22"/>
        <end position="24"/>
    </location>
</feature>
<feature type="helix" evidence="3">
    <location>
        <begin position="25"/>
        <end position="34"/>
    </location>
</feature>
<feature type="strand" evidence="3">
    <location>
        <begin position="38"/>
        <end position="42"/>
    </location>
</feature>
<feature type="helix" evidence="3">
    <location>
        <begin position="46"/>
        <end position="51"/>
    </location>
</feature>
<feature type="strand" evidence="3">
    <location>
        <begin position="57"/>
        <end position="61"/>
    </location>
</feature>
<feature type="helix" evidence="3">
    <location>
        <begin position="77"/>
        <end position="79"/>
    </location>
</feature>
<feature type="helix" evidence="3">
    <location>
        <begin position="82"/>
        <end position="85"/>
    </location>
</feature>
<feature type="strand" evidence="3">
    <location>
        <begin position="89"/>
        <end position="93"/>
    </location>
</feature>
<feature type="helix" evidence="3">
    <location>
        <begin position="97"/>
        <end position="103"/>
    </location>
</feature>
<feature type="strand" evidence="3">
    <location>
        <begin position="109"/>
        <end position="112"/>
    </location>
</feature>
<feature type="helix" evidence="3">
    <location>
        <begin position="114"/>
        <end position="116"/>
    </location>
</feature>
<feature type="helix" evidence="3">
    <location>
        <begin position="117"/>
        <end position="124"/>
    </location>
</feature>
<feature type="strand" evidence="3">
    <location>
        <begin position="129"/>
        <end position="134"/>
    </location>
</feature>
<feature type="helix" evidence="3">
    <location>
        <begin position="143"/>
        <end position="156"/>
    </location>
</feature>
<feature type="helix" evidence="3">
    <location>
        <begin position="163"/>
        <end position="173"/>
    </location>
</feature>
<feature type="helix" evidence="3">
    <location>
        <begin position="178"/>
        <end position="185"/>
    </location>
</feature>
<feature type="helix" evidence="3">
    <location>
        <begin position="187"/>
        <end position="194"/>
    </location>
</feature>
<feature type="helix" evidence="3">
    <location>
        <begin position="198"/>
        <end position="204"/>
    </location>
</feature>
<feature type="strand" evidence="3">
    <location>
        <begin position="215"/>
        <end position="217"/>
    </location>
</feature>
<feature type="strand" evidence="3">
    <location>
        <begin position="220"/>
        <end position="222"/>
    </location>
</feature>
<reference key="1">
    <citation type="journal article" date="1999" name="Nature">
        <title>Evidence for lateral gene transfer between Archaea and Bacteria from genome sequence of Thermotoga maritima.</title>
        <authorList>
            <person name="Nelson K.E."/>
            <person name="Clayton R.A."/>
            <person name="Gill S.R."/>
            <person name="Gwinn M.L."/>
            <person name="Dodson R.J."/>
            <person name="Haft D.H."/>
            <person name="Hickey E.K."/>
            <person name="Peterson J.D."/>
            <person name="Nelson W.C."/>
            <person name="Ketchum K.A."/>
            <person name="McDonald L.A."/>
            <person name="Utterback T.R."/>
            <person name="Malek J.A."/>
            <person name="Linher K.D."/>
            <person name="Garrett M.M."/>
            <person name="Stewart A.M."/>
            <person name="Cotton M.D."/>
            <person name="Pratt M.S."/>
            <person name="Phillips C.A."/>
            <person name="Richardson D.L."/>
            <person name="Heidelberg J.F."/>
            <person name="Sutton G.G."/>
            <person name="Fleischmann R.D."/>
            <person name="Eisen J.A."/>
            <person name="White O."/>
            <person name="Salzberg S.L."/>
            <person name="Smith H.O."/>
            <person name="Venter J.C."/>
            <person name="Fraser C.M."/>
        </authorList>
    </citation>
    <scope>NUCLEOTIDE SEQUENCE [LARGE SCALE GENOMIC DNA]</scope>
    <source>
        <strain>ATCC 43589 / DSM 3109 / JCM 10099 / NBRC 100826 / MSB8</strain>
    </source>
</reference>
<gene>
    <name type="primary">comB</name>
    <name type="ordered locus">TM_0797</name>
</gene>
<keyword id="KW-0002">3D-structure</keyword>
<keyword id="KW-0378">Hydrolase</keyword>
<keyword id="KW-0460">Magnesium</keyword>
<keyword id="KW-1185">Reference proteome</keyword>